<reference key="1">
    <citation type="journal article" date="2003" name="Nat. Biotechnol.">
        <title>The genome sequence of the entomopathogenic bacterium Photorhabdus luminescens.</title>
        <authorList>
            <person name="Duchaud E."/>
            <person name="Rusniok C."/>
            <person name="Frangeul L."/>
            <person name="Buchrieser C."/>
            <person name="Givaudan A."/>
            <person name="Taourit S."/>
            <person name="Bocs S."/>
            <person name="Boursaux-Eude C."/>
            <person name="Chandler M."/>
            <person name="Charles J.-F."/>
            <person name="Dassa E."/>
            <person name="Derose R."/>
            <person name="Derzelle S."/>
            <person name="Freyssinet G."/>
            <person name="Gaudriault S."/>
            <person name="Medigue C."/>
            <person name="Lanois A."/>
            <person name="Powell K."/>
            <person name="Siguier P."/>
            <person name="Vincent R."/>
            <person name="Wingate V."/>
            <person name="Zouine M."/>
            <person name="Glaser P."/>
            <person name="Boemare N."/>
            <person name="Danchin A."/>
            <person name="Kunst F."/>
        </authorList>
    </citation>
    <scope>NUCLEOTIDE SEQUENCE [LARGE SCALE GENOMIC DNA]</scope>
    <source>
        <strain>DSM 15139 / CIP 105565 / TT01</strain>
    </source>
</reference>
<organism>
    <name type="scientific">Photorhabdus laumondii subsp. laumondii (strain DSM 15139 / CIP 105565 / TT01)</name>
    <name type="common">Photorhabdus luminescens subsp. laumondii</name>
    <dbReference type="NCBI Taxonomy" id="243265"/>
    <lineage>
        <taxon>Bacteria</taxon>
        <taxon>Pseudomonadati</taxon>
        <taxon>Pseudomonadota</taxon>
        <taxon>Gammaproteobacteria</taxon>
        <taxon>Enterobacterales</taxon>
        <taxon>Morganellaceae</taxon>
        <taxon>Photorhabdus</taxon>
    </lineage>
</organism>
<protein>
    <recommendedName>
        <fullName evidence="1">DNA-directed RNA polymerase subunit omega</fullName>
        <shortName evidence="1">RNAP omega subunit</shortName>
        <ecNumber evidence="1">2.7.7.6</ecNumber>
    </recommendedName>
    <alternativeName>
        <fullName evidence="1">RNA polymerase omega subunit</fullName>
    </alternativeName>
    <alternativeName>
        <fullName evidence="1">Transcriptase subunit omega</fullName>
    </alternativeName>
</protein>
<keyword id="KW-0240">DNA-directed RNA polymerase</keyword>
<keyword id="KW-0548">Nucleotidyltransferase</keyword>
<keyword id="KW-1185">Reference proteome</keyword>
<keyword id="KW-0804">Transcription</keyword>
<keyword id="KW-0808">Transferase</keyword>
<dbReference type="EC" id="2.7.7.6" evidence="1"/>
<dbReference type="EMBL" id="BX571859">
    <property type="protein sequence ID" value="CAE12568.1"/>
    <property type="molecule type" value="Genomic_DNA"/>
</dbReference>
<dbReference type="RefSeq" id="WP_011144672.1">
    <property type="nucleotide sequence ID" value="NC_005126.1"/>
</dbReference>
<dbReference type="SMR" id="Q7N9P3"/>
<dbReference type="STRING" id="243265.plu0273"/>
<dbReference type="GeneID" id="88806344"/>
<dbReference type="KEGG" id="plu:plu0273"/>
<dbReference type="eggNOG" id="COG1758">
    <property type="taxonomic scope" value="Bacteria"/>
</dbReference>
<dbReference type="HOGENOM" id="CLU_125406_5_3_6"/>
<dbReference type="OrthoDB" id="9796300at2"/>
<dbReference type="Proteomes" id="UP000002514">
    <property type="component" value="Chromosome"/>
</dbReference>
<dbReference type="GO" id="GO:0000428">
    <property type="term" value="C:DNA-directed RNA polymerase complex"/>
    <property type="evidence" value="ECO:0007669"/>
    <property type="project" value="UniProtKB-KW"/>
</dbReference>
<dbReference type="GO" id="GO:0003677">
    <property type="term" value="F:DNA binding"/>
    <property type="evidence" value="ECO:0007669"/>
    <property type="project" value="UniProtKB-UniRule"/>
</dbReference>
<dbReference type="GO" id="GO:0003899">
    <property type="term" value="F:DNA-directed RNA polymerase activity"/>
    <property type="evidence" value="ECO:0007669"/>
    <property type="project" value="UniProtKB-UniRule"/>
</dbReference>
<dbReference type="GO" id="GO:0006351">
    <property type="term" value="P:DNA-templated transcription"/>
    <property type="evidence" value="ECO:0007669"/>
    <property type="project" value="UniProtKB-UniRule"/>
</dbReference>
<dbReference type="FunFam" id="3.90.940.10:FF:000001">
    <property type="entry name" value="DNA-directed RNA polymerase subunit omega"/>
    <property type="match status" value="1"/>
</dbReference>
<dbReference type="Gene3D" id="3.90.940.10">
    <property type="match status" value="1"/>
</dbReference>
<dbReference type="HAMAP" id="MF_00366">
    <property type="entry name" value="RNApol_bact_RpoZ"/>
    <property type="match status" value="1"/>
</dbReference>
<dbReference type="InterPro" id="IPR003716">
    <property type="entry name" value="DNA-dir_RNA_pol_omega"/>
</dbReference>
<dbReference type="InterPro" id="IPR006110">
    <property type="entry name" value="Pol_omega/Rpo6/RPB6"/>
</dbReference>
<dbReference type="InterPro" id="IPR036161">
    <property type="entry name" value="RPB6/omega-like_sf"/>
</dbReference>
<dbReference type="NCBIfam" id="TIGR00690">
    <property type="entry name" value="rpoZ"/>
    <property type="match status" value="1"/>
</dbReference>
<dbReference type="PANTHER" id="PTHR34476">
    <property type="entry name" value="DNA-DIRECTED RNA POLYMERASE SUBUNIT OMEGA"/>
    <property type="match status" value="1"/>
</dbReference>
<dbReference type="PANTHER" id="PTHR34476:SF1">
    <property type="entry name" value="DNA-DIRECTED RNA POLYMERASE SUBUNIT OMEGA"/>
    <property type="match status" value="1"/>
</dbReference>
<dbReference type="Pfam" id="PF01192">
    <property type="entry name" value="RNA_pol_Rpb6"/>
    <property type="match status" value="1"/>
</dbReference>
<dbReference type="SMART" id="SM01409">
    <property type="entry name" value="RNA_pol_Rpb6"/>
    <property type="match status" value="1"/>
</dbReference>
<dbReference type="SUPFAM" id="SSF63562">
    <property type="entry name" value="RPB6/omega subunit-like"/>
    <property type="match status" value="1"/>
</dbReference>
<sequence>MARVTVQDAVEKIGNRFDLVLVAARRARQLQTGGKDPLVAEENDKVTVIALREVEEGLINGKILDVRERQEQQEQEAAEMQAVSAIAESRR</sequence>
<evidence type="ECO:0000255" key="1">
    <source>
        <dbReference type="HAMAP-Rule" id="MF_00366"/>
    </source>
</evidence>
<gene>
    <name evidence="1" type="primary">rpoZ</name>
    <name type="ordered locus">plu0273</name>
</gene>
<accession>Q7N9P3</accession>
<comment type="function">
    <text evidence="1">Promotes RNA polymerase assembly. Latches the N- and C-terminal regions of the beta' subunit thereby facilitating its interaction with the beta and alpha subunits.</text>
</comment>
<comment type="catalytic activity">
    <reaction evidence="1">
        <text>RNA(n) + a ribonucleoside 5'-triphosphate = RNA(n+1) + diphosphate</text>
        <dbReference type="Rhea" id="RHEA:21248"/>
        <dbReference type="Rhea" id="RHEA-COMP:14527"/>
        <dbReference type="Rhea" id="RHEA-COMP:17342"/>
        <dbReference type="ChEBI" id="CHEBI:33019"/>
        <dbReference type="ChEBI" id="CHEBI:61557"/>
        <dbReference type="ChEBI" id="CHEBI:140395"/>
        <dbReference type="EC" id="2.7.7.6"/>
    </reaction>
</comment>
<comment type="subunit">
    <text evidence="1">The RNAP catalytic core consists of 2 alpha, 1 beta, 1 beta' and 1 omega subunit. When a sigma factor is associated with the core the holoenzyme is formed, which can initiate transcription.</text>
</comment>
<comment type="similarity">
    <text evidence="1">Belongs to the RNA polymerase subunit omega family.</text>
</comment>
<proteinExistence type="inferred from homology"/>
<feature type="chain" id="PRO_0000128959" description="DNA-directed RNA polymerase subunit omega">
    <location>
        <begin position="1"/>
        <end position="91"/>
    </location>
</feature>
<name>RPOZ_PHOLL</name>